<comment type="function">
    <text evidence="4">Transcriptional activator. Recognizes and binds to the DNA sequence 5'-TGT[GT][GT]ATT-3'. Required for induction of the goosecoid (GSC) promoter by TGF-beta or activin signaling. Forms a transcriptionally active complex containing FOXH1/SMAD2/SMAD4 on a site on the GSC promoter called TARE (TGF-beta/activin response element).</text>
</comment>
<comment type="subunit">
    <text evidence="4">Interacts with the MH2 domains of SMAD2 and SMAD3.</text>
</comment>
<comment type="interaction">
    <interactant intactId="EBI-1759806">
        <id>O75593</id>
    </interactant>
    <interactant intactId="EBI-11976299">
        <id>Q5BKX5-3</id>
        <label>ACTMAP</label>
    </interactant>
    <organismsDiffer>false</organismsDiffer>
    <experiments>3</experiments>
</comment>
<comment type="interaction">
    <interactant intactId="EBI-1759806">
        <id>O75593</id>
    </interactant>
    <interactant intactId="EBI-12826295">
        <id>P19801</id>
        <label>AOC1</label>
    </interactant>
    <organismsDiffer>false</organismsDiffer>
    <experiments>3</experiments>
</comment>
<comment type="interaction">
    <interactant intactId="EBI-1759806">
        <id>O75593</id>
    </interactant>
    <interactant intactId="EBI-608057">
        <id>P10275</id>
        <label>AR</label>
    </interactant>
    <organismsDiffer>false</organismsDiffer>
    <experiments>3</experiments>
</comment>
<comment type="interaction">
    <interactant intactId="EBI-1759806">
        <id>O75593</id>
    </interactant>
    <interactant intactId="EBI-948603">
        <id>Q03989</id>
        <label>ARID5A</label>
    </interactant>
    <organismsDiffer>false</organismsDiffer>
    <experiments>4</experiments>
</comment>
<comment type="interaction">
    <interactant intactId="EBI-1759806">
        <id>O75593</id>
    </interactant>
    <interactant intactId="EBI-12811889">
        <id>Q9Y6H3</id>
        <label>ATP23</label>
    </interactant>
    <organismsDiffer>false</organismsDiffer>
    <experiments>3</experiments>
</comment>
<comment type="interaction">
    <interactant intactId="EBI-1759806">
        <id>O75593</id>
    </interactant>
    <interactant intactId="EBI-8624731">
        <id>P0C7T5</id>
        <label>ATXN1L</label>
    </interactant>
    <organismsDiffer>false</organismsDiffer>
    <experiments>6</experiments>
</comment>
<comment type="interaction">
    <interactant intactId="EBI-1759806">
        <id>O75593</id>
    </interactant>
    <interactant intactId="EBI-742695">
        <id>Q8N1L9</id>
        <label>BATF2</label>
    </interactant>
    <organismsDiffer>false</organismsDiffer>
    <experiments>3</experiments>
</comment>
<comment type="interaction">
    <interactant intactId="EBI-1759806">
        <id>O75593</id>
    </interactant>
    <interactant intactId="EBI-12809220">
        <id>Q5SWW7</id>
        <label>C10orf55</label>
    </interactant>
    <organismsDiffer>false</organismsDiffer>
    <experiments>3</experiments>
</comment>
<comment type="interaction">
    <interactant intactId="EBI-1759806">
        <id>O75593</id>
    </interactant>
    <interactant intactId="EBI-4314501">
        <id>P40199</id>
        <label>CEACAM6</label>
    </interactant>
    <organismsDiffer>false</organismsDiffer>
    <experiments>3</experiments>
</comment>
<comment type="interaction">
    <interactant intactId="EBI-1759806">
        <id>O75593</id>
    </interactant>
    <interactant intactId="EBI-718615">
        <id>Q9H5F2</id>
        <label>CFAP68</label>
    </interactant>
    <organismsDiffer>false</organismsDiffer>
    <experiments>3</experiments>
</comment>
<comment type="interaction">
    <interactant intactId="EBI-1759806">
        <id>O75593</id>
    </interactant>
    <interactant intactId="EBI-748171">
        <id>O43186</id>
        <label>CRX</label>
    </interactant>
    <organismsDiffer>false</organismsDiffer>
    <experiments>3</experiments>
</comment>
<comment type="interaction">
    <interactant intactId="EBI-1759806">
        <id>O75593</id>
    </interactant>
    <interactant intactId="EBI-7043337">
        <id>P05813</id>
        <label>CRYBA1</label>
    </interactant>
    <organismsDiffer>false</organismsDiffer>
    <experiments>3</experiments>
</comment>
<comment type="interaction">
    <interactant intactId="EBI-1759806">
        <id>O75593</id>
    </interactant>
    <interactant intactId="EBI-3867333">
        <id>A8MQ03</id>
        <label>CYSRT1</label>
    </interactant>
    <organismsDiffer>false</organismsDiffer>
    <experiments>3</experiments>
</comment>
<comment type="interaction">
    <interactant intactId="EBI-1759806">
        <id>O75593</id>
    </interactant>
    <interactant intactId="EBI-724310">
        <id>Q15038</id>
        <label>DAZAP2</label>
    </interactant>
    <organismsDiffer>false</organismsDiffer>
    <experiments>5</experiments>
</comment>
<comment type="interaction">
    <interactant intactId="EBI-1759806">
        <id>O75593</id>
    </interactant>
    <interactant intactId="EBI-12193763">
        <id>A1KXE4-2</id>
        <label>FAM168B</label>
    </interactant>
    <organismsDiffer>false</organismsDiffer>
    <experiments>3</experiments>
</comment>
<comment type="interaction">
    <interactant intactId="EBI-1759806">
        <id>O75593</id>
    </interactant>
    <interactant intactId="EBI-1384254">
        <id>Q86UY5</id>
        <label>FAM83A</label>
    </interactant>
    <organismsDiffer>false</organismsDiffer>
    <experiments>3</experiments>
</comment>
<comment type="interaction">
    <interactant intactId="EBI-1759806">
        <id>O75593</id>
    </interactant>
    <interactant intactId="EBI-17282008">
        <id>O60548</id>
        <label>FOXD2</label>
    </interactant>
    <organismsDiffer>false</organismsDiffer>
    <experiments>3</experiments>
</comment>
<comment type="interaction">
    <interactant intactId="EBI-1759806">
        <id>O75593</id>
    </interactant>
    <interactant intactId="EBI-745201">
        <id>Q9BSH5</id>
        <label>HDHD3</label>
    </interactant>
    <organismsDiffer>false</organismsDiffer>
    <experiments>3</experiments>
</comment>
<comment type="interaction">
    <interactant intactId="EBI-1759806">
        <id>O75593</id>
    </interactant>
    <interactant intactId="EBI-7231130">
        <id>Q9Y5J3</id>
        <label>HEY1</label>
    </interactant>
    <organismsDiffer>false</organismsDiffer>
    <experiments>3</experiments>
</comment>
<comment type="interaction">
    <interactant intactId="EBI-1759806">
        <id>O75593</id>
    </interactant>
    <interactant intactId="EBI-6678255">
        <id>Q14774</id>
        <label>HLX</label>
    </interactant>
    <organismsDiffer>false</organismsDiffer>
    <experiments>3</experiments>
</comment>
<comment type="interaction">
    <interactant intactId="EBI-1759806">
        <id>O75593</id>
    </interactant>
    <interactant intactId="EBI-740785">
        <id>P49639</id>
        <label>HOXA1</label>
    </interactant>
    <organismsDiffer>false</organismsDiffer>
    <experiments>3</experiments>
</comment>
<comment type="interaction">
    <interactant intactId="EBI-1759806">
        <id>O75593</id>
    </interactant>
    <interactant intactId="EBI-12056251">
        <id>Q9ULV5-2</id>
        <label>HSF4</label>
    </interactant>
    <organismsDiffer>false</organismsDiffer>
    <experiments>3</experiments>
</comment>
<comment type="interaction">
    <interactant intactId="EBI-1759806">
        <id>O75593</id>
    </interactant>
    <interactant intactId="EBI-724915">
        <id>Q53HC5</id>
        <label>KLHL26</label>
    </interactant>
    <organismsDiffer>false</organismsDiffer>
    <experiments>3</experiments>
</comment>
<comment type="interaction">
    <interactant intactId="EBI-1759806">
        <id>O75593</id>
    </interactant>
    <interactant intactId="EBI-1052037">
        <id>Q8IUC1</id>
        <label>KRTAP11-1</label>
    </interactant>
    <organismsDiffer>false</organismsDiffer>
    <experiments>3</experiments>
</comment>
<comment type="interaction">
    <interactant intactId="EBI-1759806">
        <id>O75593</id>
    </interactant>
    <interactant intactId="EBI-10241252">
        <id>Q3SY46</id>
        <label>KRTAP13-3</label>
    </interactant>
    <organismsDiffer>false</organismsDiffer>
    <experiments>3</experiments>
</comment>
<comment type="interaction">
    <interactant intactId="EBI-1759806">
        <id>O75593</id>
    </interactant>
    <interactant intactId="EBI-12196745">
        <id>Q3LHN2</id>
        <label>KRTAP19-2</label>
    </interactant>
    <organismsDiffer>false</organismsDiffer>
    <experiments>3</experiments>
</comment>
<comment type="interaction">
    <interactant intactId="EBI-1759806">
        <id>O75593</id>
    </interactant>
    <interactant intactId="EBI-12805508">
        <id>Q3LI70</id>
        <label>KRTAP19-6</label>
    </interactant>
    <organismsDiffer>false</organismsDiffer>
    <experiments>3</experiments>
</comment>
<comment type="interaction">
    <interactant intactId="EBI-1759806">
        <id>O75593</id>
    </interactant>
    <interactant intactId="EBI-10241353">
        <id>Q3SYF9</id>
        <label>KRTAP19-7</label>
    </interactant>
    <organismsDiffer>false</organismsDiffer>
    <experiments>3</experiments>
</comment>
<comment type="interaction">
    <interactant intactId="EBI-1759806">
        <id>O75593</id>
    </interactant>
    <interactant intactId="EBI-9996449">
        <id>Q9BYR8</id>
        <label>KRTAP3-1</label>
    </interactant>
    <organismsDiffer>false</organismsDiffer>
    <experiments>3</experiments>
</comment>
<comment type="interaction">
    <interactant intactId="EBI-1759806">
        <id>O75593</id>
    </interactant>
    <interactant intactId="EBI-3957694">
        <id>Q9BYR6</id>
        <label>KRTAP3-3</label>
    </interactant>
    <organismsDiffer>false</organismsDiffer>
    <experiments>3</experiments>
</comment>
<comment type="interaction">
    <interactant intactId="EBI-1759806">
        <id>O75593</id>
    </interactant>
    <interactant intactId="EBI-18394498">
        <id>Q8IUC3</id>
        <label>KRTAP7-1</label>
    </interactant>
    <organismsDiffer>false</organismsDiffer>
    <experiments>3</experiments>
</comment>
<comment type="interaction">
    <interactant intactId="EBI-1759806">
        <id>O75593</id>
    </interactant>
    <interactant intactId="EBI-9088686">
        <id>Q14847-2</id>
        <label>LASP1</label>
    </interactant>
    <organismsDiffer>false</organismsDiffer>
    <experiments>3</experiments>
</comment>
<comment type="interaction">
    <interactant intactId="EBI-1759806">
        <id>O75593</id>
    </interactant>
    <interactant intactId="EBI-716006">
        <id>Q9Y5V3</id>
        <label>MAGED1</label>
    </interactant>
    <organismsDiffer>false</organismsDiffer>
    <experiments>3</experiments>
</comment>
<comment type="interaction">
    <interactant intactId="EBI-1759806">
        <id>O75593</id>
    </interactant>
    <interactant intactId="EBI-6447480">
        <id>P35548</id>
        <label>MSX2</label>
    </interactant>
    <organismsDiffer>false</organismsDiffer>
    <experiments>3</experiments>
</comment>
<comment type="interaction">
    <interactant intactId="EBI-1759806">
        <id>O75593</id>
    </interactant>
    <interactant intactId="EBI-389883">
        <id>P16333</id>
        <label>NCK1</label>
    </interactant>
    <organismsDiffer>false</organismsDiffer>
    <experiments>2</experiments>
</comment>
<comment type="interaction">
    <interactant intactId="EBI-1759806">
        <id>O75593</id>
    </interactant>
    <interactant intactId="EBI-17490746">
        <id>A8MTQ0</id>
        <label>NOTO</label>
    </interactant>
    <organismsDiffer>false</organismsDiffer>
    <experiments>3</experiments>
</comment>
<comment type="interaction">
    <interactant intactId="EBI-1759806">
        <id>O75593</id>
    </interactant>
    <interactant intactId="EBI-12813389">
        <id>Q8TDS5</id>
        <label>OXER1</label>
    </interactant>
    <organismsDiffer>false</organismsDiffer>
    <experiments>3</experiments>
</comment>
<comment type="interaction">
    <interactant intactId="EBI-1759806">
        <id>O75593</id>
    </interactant>
    <interactant intactId="EBI-726466">
        <id>O15496</id>
        <label>PLA2G10</label>
    </interactant>
    <organismsDiffer>false</organismsDiffer>
    <experiments>3</experiments>
</comment>
<comment type="interaction">
    <interactant intactId="EBI-1759806">
        <id>O75593</id>
    </interactant>
    <interactant intactId="EBI-10171633">
        <id>Q96PV4</id>
        <label>PNMA5</label>
    </interactant>
    <organismsDiffer>false</organismsDiffer>
    <experiments>3</experiments>
</comment>
<comment type="interaction">
    <interactant intactId="EBI-1759806">
        <id>O75593</id>
    </interactant>
    <interactant intactId="EBI-5235692">
        <id>O75864</id>
        <label>PPP1R37</label>
    </interactant>
    <organismsDiffer>false</organismsDiffer>
    <experiments>3</experiments>
</comment>
<comment type="interaction">
    <interactant intactId="EBI-1759806">
        <id>O75593</id>
    </interactant>
    <interactant intactId="EBI-12754095">
        <id>P86480</id>
        <label>PRR20D</label>
    </interactant>
    <organismsDiffer>false</organismsDiffer>
    <experiments>3</experiments>
</comment>
<comment type="interaction">
    <interactant intactId="EBI-1759806">
        <id>O75593</id>
    </interactant>
    <interactant intactId="EBI-12068216">
        <id>Q8TBY0</id>
        <label>RBM46</label>
    </interactant>
    <organismsDiffer>false</organismsDiffer>
    <experiments>3</experiments>
</comment>
<comment type="interaction">
    <interactant intactId="EBI-1759806">
        <id>O75593</id>
    </interactant>
    <interactant intactId="EBI-11987469">
        <id>Q6ZRY4</id>
        <label>RBPMS2</label>
    </interactant>
    <organismsDiffer>false</organismsDiffer>
    <experiments>3</experiments>
</comment>
<comment type="interaction">
    <interactant intactId="EBI-1759806">
        <id>O75593</id>
    </interactant>
    <interactant intactId="EBI-465368">
        <id>Q9UGK8</id>
        <label>SERGEF</label>
    </interactant>
    <organismsDiffer>false</organismsDiffer>
    <experiments>3</experiments>
</comment>
<comment type="interaction">
    <interactant intactId="EBI-1759806">
        <id>O75593</id>
    </interactant>
    <interactant intactId="EBI-1040141">
        <id>Q15796</id>
        <label>SMAD2</label>
    </interactant>
    <organismsDiffer>false</organismsDiffer>
    <experiments>4</experiments>
</comment>
<comment type="interaction">
    <interactant intactId="EBI-1759806">
        <id>O75593</id>
    </interactant>
    <interactant intactId="EBI-347161">
        <id>P84022</id>
        <label>SMAD3</label>
    </interactant>
    <organismsDiffer>false</organismsDiffer>
    <experiments>4</experiments>
</comment>
<comment type="interaction">
    <interactant intactId="EBI-1759806">
        <id>O75593</id>
    </interactant>
    <interactant intactId="EBI-9087806">
        <id>O95416</id>
        <label>SOX14</label>
    </interactant>
    <organismsDiffer>false</organismsDiffer>
    <experiments>3</experiments>
</comment>
<comment type="interaction">
    <interactant intactId="EBI-1759806">
        <id>O75593</id>
    </interactant>
    <interactant intactId="EBI-722877">
        <id>Q99081</id>
        <label>TCF12</label>
    </interactant>
    <organismsDiffer>false</organismsDiffer>
    <experiments>2</experiments>
</comment>
<comment type="interaction">
    <interactant intactId="EBI-1759806">
        <id>O75593</id>
    </interactant>
    <interactant intactId="EBI-769630">
        <id>P15923</id>
        <label>TCF3</label>
    </interactant>
    <organismsDiffer>false</organismsDiffer>
    <experiments>2</experiments>
</comment>
<comment type="interaction">
    <interactant intactId="EBI-1759806">
        <id>O75593</id>
    </interactant>
    <interactant intactId="EBI-10239812">
        <id>Q96M29</id>
        <label>TEKT5</label>
    </interactant>
    <organismsDiffer>false</organismsDiffer>
    <experiments>3</experiments>
</comment>
<comment type="interaction">
    <interactant intactId="EBI-1759806">
        <id>O75593</id>
    </interactant>
    <interactant intactId="EBI-357061">
        <id>Q92734</id>
        <label>TFG</label>
    </interactant>
    <organismsDiffer>false</organismsDiffer>
    <experiments>3</experiments>
</comment>
<comment type="interaction">
    <interactant intactId="EBI-1759806">
        <id>O75593</id>
    </interactant>
    <interactant intactId="EBI-3939165">
        <id>O43711</id>
        <label>TLX3</label>
    </interactant>
    <organismsDiffer>false</organismsDiffer>
    <experiments>3</experiments>
</comment>
<comment type="interaction">
    <interactant intactId="EBI-1759806">
        <id>O75593</id>
    </interactant>
    <interactant intactId="EBI-12806590">
        <id>Q86WV8</id>
        <label>TSC1</label>
    </interactant>
    <organismsDiffer>false</organismsDiffer>
    <experiments>5</experiments>
</comment>
<comment type="interaction">
    <interactant intactId="EBI-1759806">
        <id>O75593</id>
    </interactant>
    <interactant intactId="EBI-2514383">
        <id>Q5T6F2</id>
        <label>UBAP2</label>
    </interactant>
    <organismsDiffer>false</organismsDiffer>
    <experiments>3</experiments>
</comment>
<comment type="interaction">
    <interactant intactId="EBI-1759806">
        <id>O75593</id>
    </interactant>
    <interactant intactId="EBI-12068150">
        <id>Q6NVU6</id>
        <label>UFSP1</label>
    </interactant>
    <organismsDiffer>false</organismsDiffer>
    <experiments>3</experiments>
</comment>
<comment type="interaction">
    <interactant intactId="EBI-1759806">
        <id>O75593</id>
    </interactant>
    <interactant intactId="EBI-742550">
        <id>Q96K80</id>
        <label>ZC3H10</label>
    </interactant>
    <organismsDiffer>false</organismsDiffer>
    <experiments>3</experiments>
</comment>
<comment type="interaction">
    <interactant intactId="EBI-1759806">
        <id>O75593</id>
    </interactant>
    <interactant intactId="EBI-11963196">
        <id>Q15915</id>
        <label>ZIC1</label>
    </interactant>
    <organismsDiffer>false</organismsDiffer>
    <experiments>3</experiments>
</comment>
<comment type="interaction">
    <interactant intactId="EBI-1759806">
        <id>O75593</id>
    </interactant>
    <interactant intactId="EBI-8832437">
        <id>Q96F45</id>
        <label>ZNF503</label>
    </interactant>
    <organismsDiffer>false</organismsDiffer>
    <experiments>3</experiments>
</comment>
<comment type="subcellular location">
    <subcellularLocation>
        <location>Nucleus</location>
    </subcellularLocation>
</comment>
<comment type="tissue specificity">
    <text evidence="4">Ubiquitous.</text>
</comment>
<comment type="domain">
    <text evidence="1">The FM region is required for binding SMAD2/SMAD4 complexes. FM2 is more effective than FM1 and only interacts with phosphorylated SMAD2 that is in an activated SMAD complex (By similarity).</text>
</comment>
<gene>
    <name type="primary">FOXH1</name>
    <name type="synonym">FAST1</name>
    <name type="synonym">FAST2</name>
</gene>
<organism>
    <name type="scientific">Homo sapiens</name>
    <name type="common">Human</name>
    <dbReference type="NCBI Taxonomy" id="9606"/>
    <lineage>
        <taxon>Eukaryota</taxon>
        <taxon>Metazoa</taxon>
        <taxon>Chordata</taxon>
        <taxon>Craniata</taxon>
        <taxon>Vertebrata</taxon>
        <taxon>Euteleostomi</taxon>
        <taxon>Mammalia</taxon>
        <taxon>Eutheria</taxon>
        <taxon>Euarchontoglires</taxon>
        <taxon>Primates</taxon>
        <taxon>Haplorrhini</taxon>
        <taxon>Catarrhini</taxon>
        <taxon>Hominidae</taxon>
        <taxon>Homo</taxon>
    </lineage>
</organism>
<accession>O75593</accession>
<accession>D3DWM4</accession>
<keyword id="KW-0002">3D-structure</keyword>
<keyword id="KW-0010">Activator</keyword>
<keyword id="KW-0238">DNA-binding</keyword>
<keyword id="KW-0539">Nucleus</keyword>
<keyword id="KW-1267">Proteomics identification</keyword>
<keyword id="KW-1185">Reference proteome</keyword>
<keyword id="KW-0804">Transcription</keyword>
<keyword id="KW-0805">Transcription regulation</keyword>
<name>FOXH1_HUMAN</name>
<evidence type="ECO:0000250" key="1"/>
<evidence type="ECO:0000255" key="2">
    <source>
        <dbReference type="PROSITE-ProRule" id="PRU00089"/>
    </source>
</evidence>
<evidence type="ECO:0000256" key="3">
    <source>
        <dbReference type="SAM" id="MobiDB-lite"/>
    </source>
</evidence>
<evidence type="ECO:0000269" key="4">
    <source>
    </source>
</evidence>
<evidence type="ECO:0007829" key="5">
    <source>
        <dbReference type="PDB" id="5XOC"/>
    </source>
</evidence>
<evidence type="ECO:0007829" key="6">
    <source>
        <dbReference type="PDB" id="7YZB"/>
    </source>
</evidence>
<protein>
    <recommendedName>
        <fullName>Forkhead box protein H1</fullName>
    </recommendedName>
    <alternativeName>
        <fullName>Forkhead activin signal transducer 1</fullName>
        <shortName>Fast-1</shortName>
        <shortName>hFAST-1</shortName>
    </alternativeName>
    <alternativeName>
        <fullName>Forkhead activin signal transducer 2</fullName>
        <shortName>Fast-2</shortName>
    </alternativeName>
</protein>
<feature type="chain" id="PRO_0000091842" description="Forkhead box protein H1">
    <location>
        <begin position="1"/>
        <end position="365"/>
    </location>
</feature>
<feature type="DNA-binding region" description="Fork-head" evidence="2">
    <location>
        <begin position="32"/>
        <end position="128"/>
    </location>
</feature>
<feature type="region of interest" description="Disordered" evidence="3">
    <location>
        <begin position="1"/>
        <end position="29"/>
    </location>
</feature>
<feature type="region of interest" description="Disordered" evidence="3">
    <location>
        <begin position="151"/>
        <end position="215"/>
    </location>
</feature>
<feature type="region of interest" description="SMAD-interaction domain (SID)">
    <location>
        <begin position="273"/>
        <end position="354"/>
    </location>
</feature>
<feature type="short sequence motif" description="Fast/FoxH1 motif 1 (FM1)">
    <location>
        <begin position="277"/>
        <end position="281"/>
    </location>
</feature>
<feature type="short sequence motif" description="Fast/FoxH1 motif 2 (FM2)">
    <location>
        <begin position="287"/>
        <end position="293"/>
    </location>
</feature>
<feature type="short sequence motif" description="SMAD interaction motif (SIM)">
    <location>
        <begin position="327"/>
        <end position="348"/>
    </location>
</feature>
<feature type="compositionally biased region" description="Pro residues" evidence="3">
    <location>
        <begin position="154"/>
        <end position="164"/>
    </location>
</feature>
<feature type="sequence variant" id="VAR_011381" description="In dbSNP:rs144830740." evidence="4">
    <original>S</original>
    <variation>T</variation>
    <location>
        <position position="113"/>
    </location>
</feature>
<feature type="sequence variant" id="VAR_011382" description="In dbSNP:rs112028242." evidence="4">
    <original>T</original>
    <variation>S</variation>
    <location>
        <position position="125"/>
    </location>
</feature>
<feature type="mutagenesis site" description="Loss of activity." evidence="4">
    <original>H</original>
    <variation>R</variation>
    <location>
        <position position="83"/>
    </location>
</feature>
<feature type="helix" evidence="6">
    <location>
        <begin position="38"/>
        <end position="48"/>
    </location>
</feature>
<feature type="helix" evidence="6">
    <location>
        <begin position="56"/>
        <end position="66"/>
    </location>
</feature>
<feature type="helix" evidence="6">
    <location>
        <begin position="77"/>
        <end position="87"/>
    </location>
</feature>
<feature type="strand" evidence="6">
    <location>
        <begin position="91"/>
        <end position="94"/>
    </location>
</feature>
<feature type="strand" evidence="6">
    <location>
        <begin position="103"/>
        <end position="105"/>
    </location>
</feature>
<feature type="strand" evidence="6">
    <location>
        <begin position="107"/>
        <end position="110"/>
    </location>
</feature>
<feature type="helix" evidence="6">
    <location>
        <begin position="112"/>
        <end position="114"/>
    </location>
</feature>
<feature type="helix" evidence="6">
    <location>
        <begin position="117"/>
        <end position="120"/>
    </location>
</feature>
<feature type="helix" evidence="6">
    <location>
        <begin position="126"/>
        <end position="131"/>
    </location>
</feature>
<feature type="strand" evidence="6">
    <location>
        <begin position="142"/>
        <end position="144"/>
    </location>
</feature>
<feature type="helix" evidence="6">
    <location>
        <begin position="145"/>
        <end position="149"/>
    </location>
</feature>
<feature type="helix" evidence="5">
    <location>
        <begin position="327"/>
        <end position="330"/>
    </location>
</feature>
<feature type="strand" evidence="5">
    <location>
        <begin position="331"/>
        <end position="333"/>
    </location>
</feature>
<feature type="strand" evidence="5">
    <location>
        <begin position="337"/>
        <end position="339"/>
    </location>
</feature>
<feature type="helix" evidence="5">
    <location>
        <begin position="340"/>
        <end position="343"/>
    </location>
</feature>
<sequence length="365" mass="39257">MGPCSGSRLGPPEAESPSQPPKRRKKRYLRHDKPPYTYLAMIALVIQAAPSRRLKLAQIIRQVQAVFPFFREDYEGWKDSIRHNLSSNRCFRKVPKDPAKPQAKGNFWAVDVSLIPAEALRLQNTALCRRWQNGGARGAFAKDLGPYVLHGRPYRPPSPPPPPSEGFSIKSLLGGSGEGAPWPGLAPQSSPVPAGTGNSGEEAVPTPPLPSSERPLWPLCPLPGPTRVEGETVQGGAIGPSTLSPEPRAWPLHLLQGTAVPGGRSSGGHRASLWGQLPTSYLPIYTPNVVMPLAPPPTSCPQCPSTSPAYWGVAPETRGPPGLLCDLDALFQGVPPNKSIYDVWVSHPRDLAAPGPGWLLSWCSL</sequence>
<proteinExistence type="evidence at protein level"/>
<dbReference type="EMBL" id="AF076292">
    <property type="protein sequence ID" value="AAC34303.1"/>
    <property type="molecule type" value="mRNA"/>
</dbReference>
<dbReference type="EMBL" id="CH471162">
    <property type="protein sequence ID" value="EAW82083.1"/>
    <property type="molecule type" value="Genomic_DNA"/>
</dbReference>
<dbReference type="EMBL" id="CH471162">
    <property type="protein sequence ID" value="EAW82084.1"/>
    <property type="molecule type" value="Genomic_DNA"/>
</dbReference>
<dbReference type="CCDS" id="CCDS6428.1"/>
<dbReference type="RefSeq" id="NP_003914.1">
    <property type="nucleotide sequence ID" value="NM_003923.3"/>
</dbReference>
<dbReference type="PDB" id="5XOC">
    <property type="method" value="X-ray"/>
    <property type="resolution" value="2.40 A"/>
    <property type="chains" value="B=322-345"/>
</dbReference>
<dbReference type="PDB" id="7YZB">
    <property type="method" value="X-ray"/>
    <property type="resolution" value="1.47 A"/>
    <property type="chains" value="A=1-185"/>
</dbReference>
<dbReference type="PDBsum" id="5XOC"/>
<dbReference type="PDBsum" id="7YZB"/>
<dbReference type="SMR" id="O75593"/>
<dbReference type="BioGRID" id="114442">
    <property type="interactions" value="102"/>
</dbReference>
<dbReference type="CORUM" id="O75593"/>
<dbReference type="FunCoup" id="O75593">
    <property type="interactions" value="398"/>
</dbReference>
<dbReference type="IntAct" id="O75593">
    <property type="interactions" value="90"/>
</dbReference>
<dbReference type="MINT" id="O75593"/>
<dbReference type="STRING" id="9606.ENSP00000366534"/>
<dbReference type="GlyGen" id="O75593">
    <property type="glycosylation" value="2 sites, 1 O-linked glycan (1 site)"/>
</dbReference>
<dbReference type="iPTMnet" id="O75593"/>
<dbReference type="PhosphoSitePlus" id="O75593"/>
<dbReference type="BioMuta" id="FOXH1"/>
<dbReference type="MassIVE" id="O75593"/>
<dbReference type="PaxDb" id="9606-ENSP00000366534"/>
<dbReference type="PeptideAtlas" id="O75593"/>
<dbReference type="ProteomicsDB" id="50103"/>
<dbReference type="Antibodypedia" id="28549">
    <property type="antibodies" value="249 antibodies from 33 providers"/>
</dbReference>
<dbReference type="DNASU" id="8928"/>
<dbReference type="Ensembl" id="ENST00000377317.5">
    <property type="protein sequence ID" value="ENSP00000366534.4"/>
    <property type="gene ID" value="ENSG00000160973.8"/>
</dbReference>
<dbReference type="GeneID" id="8928"/>
<dbReference type="KEGG" id="hsa:8928"/>
<dbReference type="MANE-Select" id="ENST00000377317.5">
    <property type="protein sequence ID" value="ENSP00000366534.4"/>
    <property type="RefSeq nucleotide sequence ID" value="NM_003923.3"/>
    <property type="RefSeq protein sequence ID" value="NP_003914.1"/>
</dbReference>
<dbReference type="UCSC" id="uc003zdc.4">
    <property type="organism name" value="human"/>
</dbReference>
<dbReference type="AGR" id="HGNC:3814"/>
<dbReference type="CTD" id="8928"/>
<dbReference type="DisGeNET" id="8928"/>
<dbReference type="GeneCards" id="FOXH1"/>
<dbReference type="GeneReviews" id="FOXH1"/>
<dbReference type="HGNC" id="HGNC:3814">
    <property type="gene designation" value="FOXH1"/>
</dbReference>
<dbReference type="HPA" id="ENSG00000160973">
    <property type="expression patterns" value="Tissue enhanced (brain, retina)"/>
</dbReference>
<dbReference type="MalaCards" id="FOXH1"/>
<dbReference type="MIM" id="603621">
    <property type="type" value="gene"/>
</dbReference>
<dbReference type="neXtProt" id="NX_O75593"/>
<dbReference type="OpenTargets" id="ENSG00000160973"/>
<dbReference type="Orphanet" id="93925">
    <property type="disease" value="Alobar holoprosencephaly"/>
</dbReference>
<dbReference type="Orphanet" id="93924">
    <property type="disease" value="Lobar holoprosencephaly"/>
</dbReference>
<dbReference type="Orphanet" id="280200">
    <property type="disease" value="Microform holoprosencephaly"/>
</dbReference>
<dbReference type="Orphanet" id="93926">
    <property type="disease" value="Midline interhemispheric variant of holoprosencephaly"/>
</dbReference>
<dbReference type="Orphanet" id="220386">
    <property type="disease" value="Semilobar holoprosencephaly"/>
</dbReference>
<dbReference type="Orphanet" id="280195">
    <property type="disease" value="Septopreoptic holoprosencephaly"/>
</dbReference>
<dbReference type="PharmGKB" id="PA28231"/>
<dbReference type="VEuPathDB" id="HostDB:ENSG00000160973"/>
<dbReference type="eggNOG" id="KOG2294">
    <property type="taxonomic scope" value="Eukaryota"/>
</dbReference>
<dbReference type="GeneTree" id="ENSGT00940000159537"/>
<dbReference type="HOGENOM" id="CLU_039733_0_0_1"/>
<dbReference type="InParanoid" id="O75593"/>
<dbReference type="OMA" id="QCPPSNS"/>
<dbReference type="OrthoDB" id="5954824at2759"/>
<dbReference type="PAN-GO" id="O75593">
    <property type="GO annotations" value="5 GO annotations based on evolutionary models"/>
</dbReference>
<dbReference type="PhylomeDB" id="O75593"/>
<dbReference type="TreeFam" id="TF350620"/>
<dbReference type="PathwayCommons" id="O75593"/>
<dbReference type="Reactome" id="R-HSA-1181150">
    <property type="pathway name" value="Signaling by NODAL"/>
</dbReference>
<dbReference type="Reactome" id="R-HSA-1502540">
    <property type="pathway name" value="Signaling by Activin"/>
</dbReference>
<dbReference type="Reactome" id="R-HSA-9754189">
    <property type="pathway name" value="Germ layer formation at gastrulation"/>
</dbReference>
<dbReference type="Reactome" id="R-HSA-9796292">
    <property type="pathway name" value="Formation of axial mesoderm"/>
</dbReference>
<dbReference type="SignaLink" id="O75593"/>
<dbReference type="SIGNOR" id="O75593"/>
<dbReference type="BioGRID-ORCS" id="8928">
    <property type="hits" value="16 hits in 1177 CRISPR screens"/>
</dbReference>
<dbReference type="CD-CODE" id="232F8A39">
    <property type="entry name" value="P-body"/>
</dbReference>
<dbReference type="CD-CODE" id="DEE660B4">
    <property type="entry name" value="Stress granule"/>
</dbReference>
<dbReference type="ChiTaRS" id="FOXH1">
    <property type="organism name" value="human"/>
</dbReference>
<dbReference type="GeneWiki" id="FOXH1"/>
<dbReference type="GenomeRNAi" id="8928"/>
<dbReference type="Pharos" id="O75593">
    <property type="development level" value="Tbio"/>
</dbReference>
<dbReference type="PRO" id="PR:O75593"/>
<dbReference type="Proteomes" id="UP000005640">
    <property type="component" value="Chromosome 8"/>
</dbReference>
<dbReference type="RNAct" id="O75593">
    <property type="molecule type" value="protein"/>
</dbReference>
<dbReference type="Bgee" id="ENSG00000160973">
    <property type="expression patterns" value="Expressed in male germ line stem cell (sensu Vertebrata) in testis and 104 other cell types or tissues"/>
</dbReference>
<dbReference type="GO" id="GO:0032444">
    <property type="term" value="C:activin responsive factor complex"/>
    <property type="evidence" value="ECO:0000314"/>
    <property type="project" value="BHF-UCL"/>
</dbReference>
<dbReference type="GO" id="GO:0000785">
    <property type="term" value="C:chromatin"/>
    <property type="evidence" value="ECO:0000314"/>
    <property type="project" value="BHF-UCL"/>
</dbReference>
<dbReference type="GO" id="GO:0005634">
    <property type="term" value="C:nucleus"/>
    <property type="evidence" value="ECO:0000314"/>
    <property type="project" value="BHF-UCL"/>
</dbReference>
<dbReference type="GO" id="GO:0005667">
    <property type="term" value="C:transcription regulator complex"/>
    <property type="evidence" value="ECO:0000314"/>
    <property type="project" value="BHF-UCL"/>
</dbReference>
<dbReference type="GO" id="GO:0043425">
    <property type="term" value="F:bHLH transcription factor binding"/>
    <property type="evidence" value="ECO:0000353"/>
    <property type="project" value="BHF-UCL"/>
</dbReference>
<dbReference type="GO" id="GO:0000987">
    <property type="term" value="F:cis-regulatory region sequence-specific DNA binding"/>
    <property type="evidence" value="ECO:0000305"/>
    <property type="project" value="ARUK-UCL"/>
</dbReference>
<dbReference type="GO" id="GO:0070410">
    <property type="term" value="F:co-SMAD binding"/>
    <property type="evidence" value="ECO:0000315"/>
    <property type="project" value="BHF-UCL"/>
</dbReference>
<dbReference type="GO" id="GO:0001228">
    <property type="term" value="F:DNA-binding transcription activator activity, RNA polymerase II-specific"/>
    <property type="evidence" value="ECO:0000318"/>
    <property type="project" value="GO_Central"/>
</dbReference>
<dbReference type="GO" id="GO:0000981">
    <property type="term" value="F:DNA-binding transcription factor activity, RNA polymerase II-specific"/>
    <property type="evidence" value="ECO:0000247"/>
    <property type="project" value="NTNU_SB"/>
</dbReference>
<dbReference type="GO" id="GO:0140297">
    <property type="term" value="F:DNA-binding transcription factor binding"/>
    <property type="evidence" value="ECO:0000353"/>
    <property type="project" value="UniProtKB"/>
</dbReference>
<dbReference type="GO" id="GO:0050681">
    <property type="term" value="F:nuclear androgen receptor binding"/>
    <property type="evidence" value="ECO:0000353"/>
    <property type="project" value="BHF-UCL"/>
</dbReference>
<dbReference type="GO" id="GO:0019904">
    <property type="term" value="F:protein domain specific binding"/>
    <property type="evidence" value="ECO:0000353"/>
    <property type="project" value="UniProtKB"/>
</dbReference>
<dbReference type="GO" id="GO:0070412">
    <property type="term" value="F:R-SMAD binding"/>
    <property type="evidence" value="ECO:0000315"/>
    <property type="project" value="BHF-UCL"/>
</dbReference>
<dbReference type="GO" id="GO:0043565">
    <property type="term" value="F:sequence-specific DNA binding"/>
    <property type="evidence" value="ECO:0000314"/>
    <property type="project" value="UniProtKB"/>
</dbReference>
<dbReference type="GO" id="GO:0046332">
    <property type="term" value="F:SMAD binding"/>
    <property type="evidence" value="ECO:0000353"/>
    <property type="project" value="BHF-UCL"/>
</dbReference>
<dbReference type="GO" id="GO:0000976">
    <property type="term" value="F:transcription cis-regulatory region binding"/>
    <property type="evidence" value="ECO:0000250"/>
    <property type="project" value="BHF-UCL"/>
</dbReference>
<dbReference type="GO" id="GO:0003714">
    <property type="term" value="F:transcription corepressor activity"/>
    <property type="evidence" value="ECO:0000314"/>
    <property type="project" value="BHF-UCL"/>
</dbReference>
<dbReference type="GO" id="GO:0035909">
    <property type="term" value="P:aorta morphogenesis"/>
    <property type="evidence" value="ECO:0000250"/>
    <property type="project" value="ARUK-UCL"/>
</dbReference>
<dbReference type="GO" id="GO:0048318">
    <property type="term" value="P:axial mesoderm development"/>
    <property type="evidence" value="ECO:0007669"/>
    <property type="project" value="Ensembl"/>
</dbReference>
<dbReference type="GO" id="GO:0003215">
    <property type="term" value="P:cardiac right ventricle morphogenesis"/>
    <property type="evidence" value="ECO:0000250"/>
    <property type="project" value="BHF-UCL"/>
</dbReference>
<dbReference type="GO" id="GO:0071345">
    <property type="term" value="P:cellular response to cytokine stimulus"/>
    <property type="evidence" value="ECO:0000315"/>
    <property type="project" value="UniProtKB"/>
</dbReference>
<dbReference type="GO" id="GO:0003140">
    <property type="term" value="P:determination of left/right asymmetry in lateral mesoderm"/>
    <property type="evidence" value="ECO:0000303"/>
    <property type="project" value="BHF-UCL"/>
</dbReference>
<dbReference type="GO" id="GO:0035054">
    <property type="term" value="P:embryonic heart tube anterior/posterior pattern specification"/>
    <property type="evidence" value="ECO:0007669"/>
    <property type="project" value="Ensembl"/>
</dbReference>
<dbReference type="GO" id="GO:0001947">
    <property type="term" value="P:heart looping"/>
    <property type="evidence" value="ECO:0000250"/>
    <property type="project" value="BHF-UCL"/>
</dbReference>
<dbReference type="GO" id="GO:0070365">
    <property type="term" value="P:hepatocyte differentiation"/>
    <property type="evidence" value="ECO:0007669"/>
    <property type="project" value="Ensembl"/>
</dbReference>
<dbReference type="GO" id="GO:0060766">
    <property type="term" value="P:negative regulation of androgen receptor signaling pathway"/>
    <property type="evidence" value="ECO:0000314"/>
    <property type="project" value="BHF-UCL"/>
</dbReference>
<dbReference type="GO" id="GO:0000122">
    <property type="term" value="P:negative regulation of transcription by RNA polymerase II"/>
    <property type="evidence" value="ECO:0007669"/>
    <property type="project" value="Ensembl"/>
</dbReference>
<dbReference type="GO" id="GO:0038092">
    <property type="term" value="P:nodal signaling pathway"/>
    <property type="evidence" value="ECO:0000303"/>
    <property type="project" value="BHF-UCL"/>
</dbReference>
<dbReference type="GO" id="GO:0003151">
    <property type="term" value="P:outflow tract morphogenesis"/>
    <property type="evidence" value="ECO:0000250"/>
    <property type="project" value="BHF-UCL"/>
</dbReference>
<dbReference type="GO" id="GO:0045893">
    <property type="term" value="P:positive regulation of DNA-templated transcription"/>
    <property type="evidence" value="ECO:0000314"/>
    <property type="project" value="UniProtKB"/>
</dbReference>
<dbReference type="GO" id="GO:0045944">
    <property type="term" value="P:positive regulation of transcription by RNA polymerase II"/>
    <property type="evidence" value="ECO:0000314"/>
    <property type="project" value="UniProtKB"/>
</dbReference>
<dbReference type="GO" id="GO:0003139">
    <property type="term" value="P:secondary heart field specification"/>
    <property type="evidence" value="ECO:0000250"/>
    <property type="project" value="BHF-UCL"/>
</dbReference>
<dbReference type="GO" id="GO:0007179">
    <property type="term" value="P:transforming growth factor beta receptor signaling pathway"/>
    <property type="evidence" value="ECO:0000250"/>
    <property type="project" value="BHF-UCL"/>
</dbReference>
<dbReference type="GO" id="GO:0003222">
    <property type="term" value="P:ventricular trabecula myocardium morphogenesis"/>
    <property type="evidence" value="ECO:0000250"/>
    <property type="project" value="BHF-UCL"/>
</dbReference>
<dbReference type="CDD" id="cd20022">
    <property type="entry name" value="FH_FOXH"/>
    <property type="match status" value="1"/>
</dbReference>
<dbReference type="FunFam" id="1.10.10.10:FF:000278">
    <property type="entry name" value="Forkhead box protein H1"/>
    <property type="match status" value="1"/>
</dbReference>
<dbReference type="Gene3D" id="1.10.10.10">
    <property type="entry name" value="Winged helix-like DNA-binding domain superfamily/Winged helix DNA-binding domain"/>
    <property type="match status" value="1"/>
</dbReference>
<dbReference type="InterPro" id="IPR052327">
    <property type="entry name" value="Activin_resp_transcr_regulator"/>
</dbReference>
<dbReference type="InterPro" id="IPR047511">
    <property type="entry name" value="FH_FOXH1"/>
</dbReference>
<dbReference type="InterPro" id="IPR001766">
    <property type="entry name" value="Fork_head_dom"/>
</dbReference>
<dbReference type="InterPro" id="IPR030456">
    <property type="entry name" value="TF_fork_head_CS_2"/>
</dbReference>
<dbReference type="InterPro" id="IPR036388">
    <property type="entry name" value="WH-like_DNA-bd_sf"/>
</dbReference>
<dbReference type="InterPro" id="IPR036390">
    <property type="entry name" value="WH_DNA-bd_sf"/>
</dbReference>
<dbReference type="PANTHER" id="PTHR47316">
    <property type="entry name" value="FORKHEAD BOX PROTEIN H1"/>
    <property type="match status" value="1"/>
</dbReference>
<dbReference type="PANTHER" id="PTHR47316:SF1">
    <property type="entry name" value="FORKHEAD BOX PROTEIN H1"/>
    <property type="match status" value="1"/>
</dbReference>
<dbReference type="Pfam" id="PF00250">
    <property type="entry name" value="Forkhead"/>
    <property type="match status" value="1"/>
</dbReference>
<dbReference type="PRINTS" id="PR00053">
    <property type="entry name" value="FORKHEAD"/>
</dbReference>
<dbReference type="SMART" id="SM00339">
    <property type="entry name" value="FH"/>
    <property type="match status" value="1"/>
</dbReference>
<dbReference type="SUPFAM" id="SSF46785">
    <property type="entry name" value="Winged helix' DNA-binding domain"/>
    <property type="match status" value="1"/>
</dbReference>
<dbReference type="PROSITE" id="PS00658">
    <property type="entry name" value="FORK_HEAD_2"/>
    <property type="match status" value="1"/>
</dbReference>
<dbReference type="PROSITE" id="PS50039">
    <property type="entry name" value="FORK_HEAD_3"/>
    <property type="match status" value="1"/>
</dbReference>
<reference key="1">
    <citation type="journal article" date="1998" name="Mol. Cell">
        <title>Characterization of human FAST-1, a TGF beta and activin signal transducer.</title>
        <authorList>
            <person name="Zhou S."/>
            <person name="Zawel L."/>
            <person name="Lengauer C."/>
            <person name="Kinzler K.W."/>
            <person name="Vogelstein B."/>
        </authorList>
    </citation>
    <scope>NUCLEOTIDE SEQUENCE [MRNA]</scope>
    <scope>FUNCTION</scope>
    <scope>DNA-BINDING</scope>
    <scope>INTERACTION WITH SMAD2</scope>
    <scope>TISSUE SPECIFICITY</scope>
    <scope>MUTAGENESIS OF HIS-83</scope>
    <scope>VARIANTS THR-113 AND SER-125</scope>
    <source>
        <tissue>Colon adenocarcinoma</tissue>
    </source>
</reference>
<reference key="2">
    <citation type="submission" date="2005-09" db="EMBL/GenBank/DDBJ databases">
        <authorList>
            <person name="Mural R.J."/>
            <person name="Istrail S."/>
            <person name="Sutton G.G."/>
            <person name="Florea L."/>
            <person name="Halpern A.L."/>
            <person name="Mobarry C.M."/>
            <person name="Lippert R."/>
            <person name="Walenz B."/>
            <person name="Shatkay H."/>
            <person name="Dew I."/>
            <person name="Miller J.R."/>
            <person name="Flanigan M.J."/>
            <person name="Edwards N.J."/>
            <person name="Bolanos R."/>
            <person name="Fasulo D."/>
            <person name="Halldorsson B.V."/>
            <person name="Hannenhalli S."/>
            <person name="Turner R."/>
            <person name="Yooseph S."/>
            <person name="Lu F."/>
            <person name="Nusskern D.R."/>
            <person name="Shue B.C."/>
            <person name="Zheng X.H."/>
            <person name="Zhong F."/>
            <person name="Delcher A.L."/>
            <person name="Huson D.H."/>
            <person name="Kravitz S.A."/>
            <person name="Mouchard L."/>
            <person name="Reinert K."/>
            <person name="Remington K.A."/>
            <person name="Clark A.G."/>
            <person name="Waterman M.S."/>
            <person name="Eichler E.E."/>
            <person name="Adams M.D."/>
            <person name="Hunkapiller M.W."/>
            <person name="Myers E.W."/>
            <person name="Venter J.C."/>
        </authorList>
    </citation>
    <scope>NUCLEOTIDE SEQUENCE [LARGE SCALE GENOMIC DNA]</scope>
</reference>